<evidence type="ECO:0000255" key="1"/>
<evidence type="ECO:0000305" key="2"/>
<accession>Q10244</accession>
<comment type="subcellular location">
    <subcellularLocation>
        <location evidence="2">Membrane</location>
        <topology evidence="2">Multi-pass membrane protein</topology>
    </subcellularLocation>
</comment>
<comment type="similarity">
    <text evidence="2">Belongs to the peroxisomal membrane protein PXMP2/4 family.</text>
</comment>
<gene>
    <name type="ORF">SPAC4G9.14</name>
</gene>
<name>YD1E_SCHPO</name>
<sequence length="221" mass="25414">MFIAKSIVIGLLICVLFFFFFVSRFNDKYELQPLLTLGLLNASLTALSDLLAQALDSYKLLKFRNKRDVSLEKYGNTILLPASTSKLDVHRTIRYAAYGLCLTPIQFRWFVALSNVIQTENPFIAIVLRVALDQFIFAPLGIVFFFLFMGITECKSYERLKSYFRKHYWPTLKANYILWPAVQLFNFTFVPLVLQVIFANAVSMVWTAYLSLKNSSPNADV</sequence>
<dbReference type="EMBL" id="CU329670">
    <property type="protein sequence ID" value="CAA93564.1"/>
    <property type="molecule type" value="Genomic_DNA"/>
</dbReference>
<dbReference type="PIR" id="T38873">
    <property type="entry name" value="T38873"/>
</dbReference>
<dbReference type="BioGRID" id="280013">
    <property type="interactions" value="9"/>
</dbReference>
<dbReference type="FunCoup" id="Q10244">
    <property type="interactions" value="380"/>
</dbReference>
<dbReference type="STRING" id="284812.Q10244"/>
<dbReference type="iPTMnet" id="Q10244"/>
<dbReference type="PaxDb" id="4896-SPAC4G9.14.1"/>
<dbReference type="EnsemblFungi" id="SPAC4G9.14.1">
    <property type="protein sequence ID" value="SPAC4G9.14.1:pep"/>
    <property type="gene ID" value="SPAC4G9.14"/>
</dbReference>
<dbReference type="KEGG" id="spo:2543598"/>
<dbReference type="PomBase" id="SPAC4G9.14"/>
<dbReference type="VEuPathDB" id="FungiDB:SPAC4G9.14"/>
<dbReference type="eggNOG" id="KOG1944">
    <property type="taxonomic scope" value="Eukaryota"/>
</dbReference>
<dbReference type="HOGENOM" id="CLU_049109_8_0_1"/>
<dbReference type="InParanoid" id="Q10244"/>
<dbReference type="OMA" id="FMGITEC"/>
<dbReference type="PhylomeDB" id="Q10244"/>
<dbReference type="Reactome" id="R-SPO-9033241">
    <property type="pathway name" value="Peroxisomal protein import"/>
</dbReference>
<dbReference type="PRO" id="PR:Q10244"/>
<dbReference type="Proteomes" id="UP000002485">
    <property type="component" value="Chromosome I"/>
</dbReference>
<dbReference type="GO" id="GO:0005737">
    <property type="term" value="C:cytoplasm"/>
    <property type="evidence" value="ECO:0000318"/>
    <property type="project" value="GO_Central"/>
</dbReference>
<dbReference type="GO" id="GO:0005794">
    <property type="term" value="C:Golgi apparatus"/>
    <property type="evidence" value="ECO:0007005"/>
    <property type="project" value="PomBase"/>
</dbReference>
<dbReference type="GO" id="GO:0005743">
    <property type="term" value="C:mitochondrial inner membrane"/>
    <property type="evidence" value="ECO:0000266"/>
    <property type="project" value="PomBase"/>
</dbReference>
<dbReference type="GO" id="GO:0005739">
    <property type="term" value="C:mitochondrion"/>
    <property type="evidence" value="ECO:0000318"/>
    <property type="project" value="GO_Central"/>
</dbReference>
<dbReference type="InterPro" id="IPR007248">
    <property type="entry name" value="Mpv17_PMP22"/>
</dbReference>
<dbReference type="PANTHER" id="PTHR11266">
    <property type="entry name" value="PEROXISOMAL MEMBRANE PROTEIN 2, PXMP2 MPV17"/>
    <property type="match status" value="1"/>
</dbReference>
<dbReference type="PANTHER" id="PTHR11266:SF50">
    <property type="entry name" value="VACUOLAR MEMBRANE PROTEIN YOR292C"/>
    <property type="match status" value="1"/>
</dbReference>
<dbReference type="Pfam" id="PF04117">
    <property type="entry name" value="Mpv17_PMP22"/>
    <property type="match status" value="1"/>
</dbReference>
<reference key="1">
    <citation type="journal article" date="2002" name="Nature">
        <title>The genome sequence of Schizosaccharomyces pombe.</title>
        <authorList>
            <person name="Wood V."/>
            <person name="Gwilliam R."/>
            <person name="Rajandream M.A."/>
            <person name="Lyne M.H."/>
            <person name="Lyne R."/>
            <person name="Stewart A."/>
            <person name="Sgouros J.G."/>
            <person name="Peat N."/>
            <person name="Hayles J."/>
            <person name="Baker S.G."/>
            <person name="Basham D."/>
            <person name="Bowman S."/>
            <person name="Brooks K."/>
            <person name="Brown D."/>
            <person name="Brown S."/>
            <person name="Chillingworth T."/>
            <person name="Churcher C.M."/>
            <person name="Collins M."/>
            <person name="Connor R."/>
            <person name="Cronin A."/>
            <person name="Davis P."/>
            <person name="Feltwell T."/>
            <person name="Fraser A."/>
            <person name="Gentles S."/>
            <person name="Goble A."/>
            <person name="Hamlin N."/>
            <person name="Harris D.E."/>
            <person name="Hidalgo J."/>
            <person name="Hodgson G."/>
            <person name="Holroyd S."/>
            <person name="Hornsby T."/>
            <person name="Howarth S."/>
            <person name="Huckle E.J."/>
            <person name="Hunt S."/>
            <person name="Jagels K."/>
            <person name="James K.D."/>
            <person name="Jones L."/>
            <person name="Jones M."/>
            <person name="Leather S."/>
            <person name="McDonald S."/>
            <person name="McLean J."/>
            <person name="Mooney P."/>
            <person name="Moule S."/>
            <person name="Mungall K.L."/>
            <person name="Murphy L.D."/>
            <person name="Niblett D."/>
            <person name="Odell C."/>
            <person name="Oliver K."/>
            <person name="O'Neil S."/>
            <person name="Pearson D."/>
            <person name="Quail M.A."/>
            <person name="Rabbinowitsch E."/>
            <person name="Rutherford K.M."/>
            <person name="Rutter S."/>
            <person name="Saunders D."/>
            <person name="Seeger K."/>
            <person name="Sharp S."/>
            <person name="Skelton J."/>
            <person name="Simmonds M.N."/>
            <person name="Squares R."/>
            <person name="Squares S."/>
            <person name="Stevens K."/>
            <person name="Taylor K."/>
            <person name="Taylor R.G."/>
            <person name="Tivey A."/>
            <person name="Walsh S.V."/>
            <person name="Warren T."/>
            <person name="Whitehead S."/>
            <person name="Woodward J.R."/>
            <person name="Volckaert G."/>
            <person name="Aert R."/>
            <person name="Robben J."/>
            <person name="Grymonprez B."/>
            <person name="Weltjens I."/>
            <person name="Vanstreels E."/>
            <person name="Rieger M."/>
            <person name="Schaefer M."/>
            <person name="Mueller-Auer S."/>
            <person name="Gabel C."/>
            <person name="Fuchs M."/>
            <person name="Duesterhoeft A."/>
            <person name="Fritzc C."/>
            <person name="Holzer E."/>
            <person name="Moestl D."/>
            <person name="Hilbert H."/>
            <person name="Borzym K."/>
            <person name="Langer I."/>
            <person name="Beck A."/>
            <person name="Lehrach H."/>
            <person name="Reinhardt R."/>
            <person name="Pohl T.M."/>
            <person name="Eger P."/>
            <person name="Zimmermann W."/>
            <person name="Wedler H."/>
            <person name="Wambutt R."/>
            <person name="Purnelle B."/>
            <person name="Goffeau A."/>
            <person name="Cadieu E."/>
            <person name="Dreano S."/>
            <person name="Gloux S."/>
            <person name="Lelaure V."/>
            <person name="Mottier S."/>
            <person name="Galibert F."/>
            <person name="Aves S.J."/>
            <person name="Xiang Z."/>
            <person name="Hunt C."/>
            <person name="Moore K."/>
            <person name="Hurst S.M."/>
            <person name="Lucas M."/>
            <person name="Rochet M."/>
            <person name="Gaillardin C."/>
            <person name="Tallada V.A."/>
            <person name="Garzon A."/>
            <person name="Thode G."/>
            <person name="Daga R.R."/>
            <person name="Cruzado L."/>
            <person name="Jimenez J."/>
            <person name="Sanchez M."/>
            <person name="del Rey F."/>
            <person name="Benito J."/>
            <person name="Dominguez A."/>
            <person name="Revuelta J.L."/>
            <person name="Moreno S."/>
            <person name="Armstrong J."/>
            <person name="Forsburg S.L."/>
            <person name="Cerutti L."/>
            <person name="Lowe T."/>
            <person name="McCombie W.R."/>
            <person name="Paulsen I."/>
            <person name="Potashkin J."/>
            <person name="Shpakovski G.V."/>
            <person name="Ussery D."/>
            <person name="Barrell B.G."/>
            <person name="Nurse P."/>
        </authorList>
    </citation>
    <scope>NUCLEOTIDE SEQUENCE [LARGE SCALE GENOMIC DNA]</scope>
    <source>
        <strain>972 / ATCC 24843</strain>
    </source>
</reference>
<protein>
    <recommendedName>
        <fullName>Uncharacterized protein C4G9.14</fullName>
    </recommendedName>
</protein>
<proteinExistence type="inferred from homology"/>
<feature type="chain" id="PRO_0000218936" description="Uncharacterized protein C4G9.14">
    <location>
        <begin position="1"/>
        <end position="221"/>
    </location>
</feature>
<feature type="transmembrane region" description="Helical" evidence="1">
    <location>
        <begin position="2"/>
        <end position="22"/>
    </location>
</feature>
<feature type="transmembrane region" description="Helical" evidence="1">
    <location>
        <begin position="34"/>
        <end position="54"/>
    </location>
</feature>
<feature type="transmembrane region" description="Helical" evidence="1">
    <location>
        <begin position="97"/>
        <end position="117"/>
    </location>
</feature>
<feature type="transmembrane region" description="Helical" evidence="1">
    <location>
        <begin position="131"/>
        <end position="151"/>
    </location>
</feature>
<feature type="transmembrane region" description="Helical" evidence="1">
    <location>
        <begin position="177"/>
        <end position="197"/>
    </location>
</feature>
<keyword id="KW-0472">Membrane</keyword>
<keyword id="KW-1185">Reference proteome</keyword>
<keyword id="KW-0812">Transmembrane</keyword>
<keyword id="KW-1133">Transmembrane helix</keyword>
<organism>
    <name type="scientific">Schizosaccharomyces pombe (strain 972 / ATCC 24843)</name>
    <name type="common">Fission yeast</name>
    <dbReference type="NCBI Taxonomy" id="284812"/>
    <lineage>
        <taxon>Eukaryota</taxon>
        <taxon>Fungi</taxon>
        <taxon>Dikarya</taxon>
        <taxon>Ascomycota</taxon>
        <taxon>Taphrinomycotina</taxon>
        <taxon>Schizosaccharomycetes</taxon>
        <taxon>Schizosaccharomycetales</taxon>
        <taxon>Schizosaccharomycetaceae</taxon>
        <taxon>Schizosaccharomyces</taxon>
    </lineage>
</organism>